<protein>
    <recommendedName>
        <fullName evidence="1">Phosphoribosylformylglycinamidine synthase subunit PurQ</fullName>
        <shortName evidence="1">FGAM synthase</shortName>
        <ecNumber evidence="1">6.3.5.3</ecNumber>
    </recommendedName>
    <alternativeName>
        <fullName evidence="1">Formylglycinamide ribonucleotide amidotransferase subunit I</fullName>
        <shortName evidence="1">FGAR amidotransferase I</shortName>
        <shortName evidence="1">FGAR-AT I</shortName>
    </alternativeName>
    <alternativeName>
        <fullName evidence="1">Glutaminase PurQ</fullName>
        <ecNumber evidence="1">3.5.1.2</ecNumber>
    </alternativeName>
    <alternativeName>
        <fullName evidence="1">Phosphoribosylformylglycinamidine synthase subunit I</fullName>
    </alternativeName>
</protein>
<comment type="function">
    <text evidence="1">Part of the phosphoribosylformylglycinamidine synthase complex involved in the purines biosynthetic pathway. Catalyzes the ATP-dependent conversion of formylglycinamide ribonucleotide (FGAR) and glutamine to yield formylglycinamidine ribonucleotide (FGAM) and glutamate. The FGAM synthase complex is composed of three subunits. PurQ produces an ammonia molecule by converting glutamine to glutamate. PurL transfers the ammonia molecule to FGAR to form FGAM in an ATP-dependent manner. PurS interacts with PurQ and PurL and is thought to assist in the transfer of the ammonia molecule from PurQ to PurL.</text>
</comment>
<comment type="catalytic activity">
    <reaction evidence="1">
        <text>N(2)-formyl-N(1)-(5-phospho-beta-D-ribosyl)glycinamide + L-glutamine + ATP + H2O = 2-formamido-N(1)-(5-O-phospho-beta-D-ribosyl)acetamidine + L-glutamate + ADP + phosphate + H(+)</text>
        <dbReference type="Rhea" id="RHEA:17129"/>
        <dbReference type="ChEBI" id="CHEBI:15377"/>
        <dbReference type="ChEBI" id="CHEBI:15378"/>
        <dbReference type="ChEBI" id="CHEBI:29985"/>
        <dbReference type="ChEBI" id="CHEBI:30616"/>
        <dbReference type="ChEBI" id="CHEBI:43474"/>
        <dbReference type="ChEBI" id="CHEBI:58359"/>
        <dbReference type="ChEBI" id="CHEBI:147286"/>
        <dbReference type="ChEBI" id="CHEBI:147287"/>
        <dbReference type="ChEBI" id="CHEBI:456216"/>
        <dbReference type="EC" id="6.3.5.3"/>
    </reaction>
</comment>
<comment type="catalytic activity">
    <reaction evidence="1">
        <text>L-glutamine + H2O = L-glutamate + NH4(+)</text>
        <dbReference type="Rhea" id="RHEA:15889"/>
        <dbReference type="ChEBI" id="CHEBI:15377"/>
        <dbReference type="ChEBI" id="CHEBI:28938"/>
        <dbReference type="ChEBI" id="CHEBI:29985"/>
        <dbReference type="ChEBI" id="CHEBI:58359"/>
        <dbReference type="EC" id="3.5.1.2"/>
    </reaction>
</comment>
<comment type="pathway">
    <text evidence="1">Purine metabolism; IMP biosynthesis via de novo pathway; 5-amino-1-(5-phospho-D-ribosyl)imidazole from N(2)-formyl-N(1)-(5-phospho-D-ribosyl)glycinamide: step 1/2.</text>
</comment>
<comment type="subunit">
    <text evidence="1">Part of the FGAM synthase complex composed of 1 PurL, 1 PurQ and 2 PurS subunits.</text>
</comment>
<comment type="subcellular location">
    <subcellularLocation>
        <location evidence="1">Cytoplasm</location>
    </subcellularLocation>
</comment>
<organism>
    <name type="scientific">Geobacillus thermodenitrificans (strain NG80-2)</name>
    <dbReference type="NCBI Taxonomy" id="420246"/>
    <lineage>
        <taxon>Bacteria</taxon>
        <taxon>Bacillati</taxon>
        <taxon>Bacillota</taxon>
        <taxon>Bacilli</taxon>
        <taxon>Bacillales</taxon>
        <taxon>Anoxybacillaceae</taxon>
        <taxon>Geobacillus</taxon>
    </lineage>
</organism>
<keyword id="KW-0067">ATP-binding</keyword>
<keyword id="KW-0963">Cytoplasm</keyword>
<keyword id="KW-0315">Glutamine amidotransferase</keyword>
<keyword id="KW-0378">Hydrolase</keyword>
<keyword id="KW-0436">Ligase</keyword>
<keyword id="KW-0547">Nucleotide-binding</keyword>
<keyword id="KW-0658">Purine biosynthesis</keyword>
<proteinExistence type="inferred from homology"/>
<feature type="chain" id="PRO_1000124119" description="Phosphoribosylformylglycinamidine synthase subunit PurQ">
    <location>
        <begin position="1"/>
        <end position="228"/>
    </location>
</feature>
<feature type="domain" description="Glutamine amidotransferase type-1" evidence="1">
    <location>
        <begin position="3"/>
        <end position="226"/>
    </location>
</feature>
<feature type="active site" description="Nucleophile" evidence="1">
    <location>
        <position position="86"/>
    </location>
</feature>
<feature type="active site" evidence="1">
    <location>
        <position position="195"/>
    </location>
</feature>
<feature type="active site" evidence="1">
    <location>
        <position position="197"/>
    </location>
</feature>
<sequence>MKFAVIVFPGSNCDVDMYHAIADELGEEVEYVWHDEENLDRFDAILLPGGFSYGDYLRSGAIARFSKVMAAVKQAAEAGKPVLGVCNGFQILLEAGLLPGAMRRNQGLKFICRPVQLVVENNETMFTSAYGKDEVITIPIAHGEGNYYCDEQTLNRLVENRQIVFRYHGENPNGSLADIAGIVNERGNVLGMMPHPERAVDALLGSADGLKLFRSIVNYWRETHVVTA</sequence>
<dbReference type="EC" id="6.3.5.3" evidence="1"/>
<dbReference type="EC" id="3.5.1.2" evidence="1"/>
<dbReference type="EMBL" id="CP000557">
    <property type="protein sequence ID" value="ABO65626.1"/>
    <property type="molecule type" value="Genomic_DNA"/>
</dbReference>
<dbReference type="RefSeq" id="WP_008881464.1">
    <property type="nucleotide sequence ID" value="NC_009328.1"/>
</dbReference>
<dbReference type="SMR" id="A4IJX2"/>
<dbReference type="GeneID" id="87622153"/>
<dbReference type="KEGG" id="gtn:GTNG_0242"/>
<dbReference type="eggNOG" id="COG0047">
    <property type="taxonomic scope" value="Bacteria"/>
</dbReference>
<dbReference type="HOGENOM" id="CLU_001031_3_1_9"/>
<dbReference type="UniPathway" id="UPA00074">
    <property type="reaction ID" value="UER00128"/>
</dbReference>
<dbReference type="Proteomes" id="UP000001578">
    <property type="component" value="Chromosome"/>
</dbReference>
<dbReference type="GO" id="GO:0005737">
    <property type="term" value="C:cytoplasm"/>
    <property type="evidence" value="ECO:0007669"/>
    <property type="project" value="UniProtKB-SubCell"/>
</dbReference>
<dbReference type="GO" id="GO:0005524">
    <property type="term" value="F:ATP binding"/>
    <property type="evidence" value="ECO:0007669"/>
    <property type="project" value="UniProtKB-KW"/>
</dbReference>
<dbReference type="GO" id="GO:0004359">
    <property type="term" value="F:glutaminase activity"/>
    <property type="evidence" value="ECO:0007669"/>
    <property type="project" value="UniProtKB-EC"/>
</dbReference>
<dbReference type="GO" id="GO:0004642">
    <property type="term" value="F:phosphoribosylformylglycinamidine synthase activity"/>
    <property type="evidence" value="ECO:0007669"/>
    <property type="project" value="UniProtKB-UniRule"/>
</dbReference>
<dbReference type="GO" id="GO:0006189">
    <property type="term" value="P:'de novo' IMP biosynthetic process"/>
    <property type="evidence" value="ECO:0007669"/>
    <property type="project" value="UniProtKB-UniRule"/>
</dbReference>
<dbReference type="CDD" id="cd01740">
    <property type="entry name" value="GATase1_FGAR_AT"/>
    <property type="match status" value="1"/>
</dbReference>
<dbReference type="FunFam" id="3.40.50.880:FF:000019">
    <property type="entry name" value="Phosphoribosylformylglycinamidine synthase subunit PurQ"/>
    <property type="match status" value="1"/>
</dbReference>
<dbReference type="Gene3D" id="3.40.50.880">
    <property type="match status" value="1"/>
</dbReference>
<dbReference type="HAMAP" id="MF_00421">
    <property type="entry name" value="PurQ"/>
    <property type="match status" value="1"/>
</dbReference>
<dbReference type="InterPro" id="IPR029062">
    <property type="entry name" value="Class_I_gatase-like"/>
</dbReference>
<dbReference type="InterPro" id="IPR010075">
    <property type="entry name" value="PRibForGlyAmidine_synth_PurQ"/>
</dbReference>
<dbReference type="NCBIfam" id="TIGR01737">
    <property type="entry name" value="FGAM_synth_I"/>
    <property type="match status" value="1"/>
</dbReference>
<dbReference type="NCBIfam" id="NF002957">
    <property type="entry name" value="PRK03619.1"/>
    <property type="match status" value="1"/>
</dbReference>
<dbReference type="PANTHER" id="PTHR47552">
    <property type="entry name" value="PHOSPHORIBOSYLFORMYLGLYCINAMIDINE SYNTHASE SUBUNIT PURQ"/>
    <property type="match status" value="1"/>
</dbReference>
<dbReference type="PANTHER" id="PTHR47552:SF1">
    <property type="entry name" value="PHOSPHORIBOSYLFORMYLGLYCINAMIDINE SYNTHASE SUBUNIT PURQ"/>
    <property type="match status" value="1"/>
</dbReference>
<dbReference type="Pfam" id="PF13507">
    <property type="entry name" value="GATase_5"/>
    <property type="match status" value="1"/>
</dbReference>
<dbReference type="PIRSF" id="PIRSF001586">
    <property type="entry name" value="FGAM_synth_I"/>
    <property type="match status" value="1"/>
</dbReference>
<dbReference type="SMART" id="SM01211">
    <property type="entry name" value="GATase_5"/>
    <property type="match status" value="1"/>
</dbReference>
<dbReference type="SUPFAM" id="SSF52317">
    <property type="entry name" value="Class I glutamine amidotransferase-like"/>
    <property type="match status" value="1"/>
</dbReference>
<dbReference type="PROSITE" id="PS51273">
    <property type="entry name" value="GATASE_TYPE_1"/>
    <property type="match status" value="1"/>
</dbReference>
<evidence type="ECO:0000255" key="1">
    <source>
        <dbReference type="HAMAP-Rule" id="MF_00421"/>
    </source>
</evidence>
<reference key="1">
    <citation type="journal article" date="2007" name="Proc. Natl. Acad. Sci. U.S.A.">
        <title>Genome and proteome of long-chain alkane degrading Geobacillus thermodenitrificans NG80-2 isolated from a deep-subsurface oil reservoir.</title>
        <authorList>
            <person name="Feng L."/>
            <person name="Wang W."/>
            <person name="Cheng J."/>
            <person name="Ren Y."/>
            <person name="Zhao G."/>
            <person name="Gao C."/>
            <person name="Tang Y."/>
            <person name="Liu X."/>
            <person name="Han W."/>
            <person name="Peng X."/>
            <person name="Liu R."/>
            <person name="Wang L."/>
        </authorList>
    </citation>
    <scope>NUCLEOTIDE SEQUENCE [LARGE SCALE GENOMIC DNA]</scope>
    <source>
        <strain>NG80-2</strain>
    </source>
</reference>
<gene>
    <name evidence="1" type="primary">purQ</name>
    <name type="ordered locus">GTNG_0242</name>
</gene>
<accession>A4IJX2</accession>
<name>PURQ_GEOTN</name>